<dbReference type="EMBL" id="CR767821">
    <property type="protein sequence ID" value="CAH57879.1"/>
    <property type="molecule type" value="Genomic_DNA"/>
</dbReference>
<dbReference type="EMBL" id="CR925678">
    <property type="protein sequence ID" value="CAI26654.1"/>
    <property type="molecule type" value="Genomic_DNA"/>
</dbReference>
<dbReference type="RefSeq" id="WP_011154847.1">
    <property type="nucleotide sequence ID" value="NC_005295.2"/>
</dbReference>
<dbReference type="SMR" id="Q5HC14"/>
<dbReference type="GeneID" id="33057617"/>
<dbReference type="KEGG" id="eru:Erum1630"/>
<dbReference type="KEGG" id="erw:ERWE_CDS_01600"/>
<dbReference type="eggNOG" id="COG0048">
    <property type="taxonomic scope" value="Bacteria"/>
</dbReference>
<dbReference type="HOGENOM" id="CLU_104295_1_2_5"/>
<dbReference type="Proteomes" id="UP000001021">
    <property type="component" value="Chromosome"/>
</dbReference>
<dbReference type="GO" id="GO:0015935">
    <property type="term" value="C:small ribosomal subunit"/>
    <property type="evidence" value="ECO:0007669"/>
    <property type="project" value="InterPro"/>
</dbReference>
<dbReference type="GO" id="GO:0019843">
    <property type="term" value="F:rRNA binding"/>
    <property type="evidence" value="ECO:0007669"/>
    <property type="project" value="UniProtKB-UniRule"/>
</dbReference>
<dbReference type="GO" id="GO:0003735">
    <property type="term" value="F:structural constituent of ribosome"/>
    <property type="evidence" value="ECO:0007669"/>
    <property type="project" value="InterPro"/>
</dbReference>
<dbReference type="GO" id="GO:0000049">
    <property type="term" value="F:tRNA binding"/>
    <property type="evidence" value="ECO:0007669"/>
    <property type="project" value="UniProtKB-UniRule"/>
</dbReference>
<dbReference type="GO" id="GO:0006412">
    <property type="term" value="P:translation"/>
    <property type="evidence" value="ECO:0007669"/>
    <property type="project" value="UniProtKB-UniRule"/>
</dbReference>
<dbReference type="CDD" id="cd03368">
    <property type="entry name" value="Ribosomal_S12"/>
    <property type="match status" value="1"/>
</dbReference>
<dbReference type="FunFam" id="2.40.50.140:FF:000001">
    <property type="entry name" value="30S ribosomal protein S12"/>
    <property type="match status" value="1"/>
</dbReference>
<dbReference type="Gene3D" id="2.40.50.140">
    <property type="entry name" value="Nucleic acid-binding proteins"/>
    <property type="match status" value="1"/>
</dbReference>
<dbReference type="HAMAP" id="MF_00403_B">
    <property type="entry name" value="Ribosomal_uS12_B"/>
    <property type="match status" value="1"/>
</dbReference>
<dbReference type="InterPro" id="IPR012340">
    <property type="entry name" value="NA-bd_OB-fold"/>
</dbReference>
<dbReference type="InterPro" id="IPR006032">
    <property type="entry name" value="Ribosomal_uS12"/>
</dbReference>
<dbReference type="InterPro" id="IPR005679">
    <property type="entry name" value="Ribosomal_uS12_bac"/>
</dbReference>
<dbReference type="NCBIfam" id="TIGR00981">
    <property type="entry name" value="rpsL_bact"/>
    <property type="match status" value="1"/>
</dbReference>
<dbReference type="PANTHER" id="PTHR11652">
    <property type="entry name" value="30S RIBOSOMAL PROTEIN S12 FAMILY MEMBER"/>
    <property type="match status" value="1"/>
</dbReference>
<dbReference type="Pfam" id="PF00164">
    <property type="entry name" value="Ribosom_S12_S23"/>
    <property type="match status" value="1"/>
</dbReference>
<dbReference type="PIRSF" id="PIRSF002133">
    <property type="entry name" value="Ribosomal_S12/S23"/>
    <property type="match status" value="1"/>
</dbReference>
<dbReference type="PRINTS" id="PR01034">
    <property type="entry name" value="RIBOSOMALS12"/>
</dbReference>
<dbReference type="SUPFAM" id="SSF50249">
    <property type="entry name" value="Nucleic acid-binding proteins"/>
    <property type="match status" value="1"/>
</dbReference>
<dbReference type="PROSITE" id="PS00055">
    <property type="entry name" value="RIBOSOMAL_S12"/>
    <property type="match status" value="1"/>
</dbReference>
<comment type="function">
    <text evidence="2">With S4 and S5 plays an important role in translational accuracy.</text>
</comment>
<comment type="function">
    <text evidence="2">Interacts with and stabilizes bases of the 16S rRNA that are involved in tRNA selection in the A site and with the mRNA backbone. Located at the interface of the 30S and 50S subunits, it traverses the body of the 30S subunit contacting proteins on the other side and probably holding the rRNA structure together. The combined cluster of proteins S8, S12 and S17 appears to hold together the shoulder and platform of the 30S subunit.</text>
</comment>
<comment type="subunit">
    <text evidence="2">Part of the 30S ribosomal subunit. Contacts proteins S8 and S17. May interact with IF1 in the 30S initiation complex.</text>
</comment>
<comment type="similarity">
    <text evidence="2">Belongs to the universal ribosomal protein uS12 family.</text>
</comment>
<evidence type="ECO:0000250" key="1"/>
<evidence type="ECO:0000255" key="2">
    <source>
        <dbReference type="HAMAP-Rule" id="MF_00403"/>
    </source>
</evidence>
<evidence type="ECO:0000305" key="3"/>
<reference key="1">
    <citation type="journal article" date="2005" name="Proc. Natl. Acad. Sci. U.S.A.">
        <title>The genome of the heartwater agent Ehrlichia ruminantium contains multiple tandem repeats of actively variable copy number.</title>
        <authorList>
            <person name="Collins N.E."/>
            <person name="Liebenberg J."/>
            <person name="de Villiers E.P."/>
            <person name="Brayton K.A."/>
            <person name="Louw E."/>
            <person name="Pretorius A."/>
            <person name="Faber F.E."/>
            <person name="van Heerden H."/>
            <person name="Josemans A."/>
            <person name="van Kleef M."/>
            <person name="Steyn H.C."/>
            <person name="van Strijp M.F."/>
            <person name="Zweygarth E."/>
            <person name="Jongejan F."/>
            <person name="Maillard J.C."/>
            <person name="Berthier D."/>
            <person name="Botha M."/>
            <person name="Joubert F."/>
            <person name="Corton C.H."/>
            <person name="Thomson N.R."/>
            <person name="Allsopp M.T."/>
            <person name="Allsopp B.A."/>
        </authorList>
    </citation>
    <scope>NUCLEOTIDE SEQUENCE [LARGE SCALE GENOMIC DNA]</scope>
    <source>
        <strain>Welgevonden</strain>
    </source>
</reference>
<reference key="2">
    <citation type="journal article" date="2006" name="J. Bacteriol.">
        <title>Comparative genomic analysis of three strains of Ehrlichia ruminantium reveals an active process of genome size plasticity.</title>
        <authorList>
            <person name="Frutos R."/>
            <person name="Viari A."/>
            <person name="Ferraz C."/>
            <person name="Morgat A."/>
            <person name="Eychenie S."/>
            <person name="Kandassamy Y."/>
            <person name="Chantal I."/>
            <person name="Bensaid A."/>
            <person name="Coissac E."/>
            <person name="Vachiery N."/>
            <person name="Demaille J."/>
            <person name="Martinez D."/>
        </authorList>
    </citation>
    <scope>NUCLEOTIDE SEQUENCE [LARGE SCALE GENOMIC DNA]</scope>
    <source>
        <strain>Welgevonden</strain>
    </source>
</reference>
<gene>
    <name evidence="2" type="primary">rpsL</name>
    <name type="ordered locus">Erum1630</name>
    <name type="ordered locus">ERWE_CDS_01600</name>
</gene>
<keyword id="KW-0488">Methylation</keyword>
<keyword id="KW-0687">Ribonucleoprotein</keyword>
<keyword id="KW-0689">Ribosomal protein</keyword>
<keyword id="KW-0694">RNA-binding</keyword>
<keyword id="KW-0699">rRNA-binding</keyword>
<keyword id="KW-0820">tRNA-binding</keyword>
<feature type="chain" id="PRO_0000295975" description="Small ribosomal subunit protein uS12">
    <location>
        <begin position="1"/>
        <end position="123"/>
    </location>
</feature>
<feature type="modified residue" description="3-methylthioaspartic acid" evidence="1">
    <location>
        <position position="90"/>
    </location>
</feature>
<proteinExistence type="inferred from homology"/>
<accession>Q5HC14</accession>
<accession>Q5FCW6</accession>
<organism>
    <name type="scientific">Ehrlichia ruminantium (strain Welgevonden)</name>
    <dbReference type="NCBI Taxonomy" id="254945"/>
    <lineage>
        <taxon>Bacteria</taxon>
        <taxon>Pseudomonadati</taxon>
        <taxon>Pseudomonadota</taxon>
        <taxon>Alphaproteobacteria</taxon>
        <taxon>Rickettsiales</taxon>
        <taxon>Anaplasmataceae</taxon>
        <taxon>Ehrlichia</taxon>
    </lineage>
</organism>
<name>RS12_EHRRW</name>
<protein>
    <recommendedName>
        <fullName evidence="2">Small ribosomal subunit protein uS12</fullName>
    </recommendedName>
    <alternativeName>
        <fullName evidence="3">30S ribosomal protein S12</fullName>
    </alternativeName>
</protein>
<sequence>MPTINQLVRSPRKSRALLNKAPALQHNPQKRAVCVKVYTTTPRKPNSALRKVARVKIAGYGSEVIAYIPGEGHNLQEHSVVLIRGGRVKDLPGVRYHIIRGALDSRGVQNRKKARSKYGVKKS</sequence>